<gene>
    <name type="primary">mndA</name>
    <name type="ORF">An11g06540</name>
</gene>
<sequence>MRHSIGLAAALLAPTLPVALGQYIRDLSTEKWTLSSRALNRTVPAQFPSQVHLDLLRAGVIGEYHGLNDFNLRWIAAANWTYTSQPIKGLLDNYDSTWLVFDGLDTFATISFCGQQIASTDNQFRQYAFDVSTALGSCKGDPVLSINFGSAPNIVDAIAQDSNSQKWPDDVQLTYEYPNRWFMRKEQSDFGWDWGPAFAPAGPWKPAYIVQLDKKESVYVLNTDLDIYRKGQINYLPPDQSQPWVVNASIDILGPLPTKPTMSIEVRDTHSGTILTSRTLNNVSVAGNAITGVTVLDGLTPKLWWPQGLGDQNLYNVSITVQSRGNQTVASVNKRTGFRTIFLNQRNITEAQRAQGIAPGANWHFEVNGHEFYAKGSNLIPPDSFWTRVTEEKMSRLFDAVVVGNQNMLRVWSSGAYLHDYIYDLADEKGILLWSEFEFSDALYPSDDAFLENVAAEIVYNVRRVNHHPSLALWAGGNEIESLMLPRVKDAAPSSYSYYVGEYEKMYISLFLPLVYENTRSISYSPSSTTEGYLYIDLSAPVPMAERYDNTTSGSYYGDTDHYDYDTSVAFDYGSYPVGRFANEFGFHSMPSLQTWQQAVDTEDLYFNSSVVMLRNHHDPAGGLMTDNYANSATGMGEMTMGVVSYYPIPSKSDHISNFSAWCHATQLFQADMYKSQIQFYRRGSGMPERQLGSLYWQLEDIWQAPSWAGIEYGGRWKVLHHVMRDIYQPVIVSPFWNYTTGSLDVYVTSDLWSPAAGTVDLTWLDLSGRPIAGNAGTPKSVPFTVGGLNSTRIYGTNVSSLGLPDTKDAVLILSLSAHGRLPNSDRTTNLTHENYATLSWPKDLKIVDPGLKIGHSSKKTTVTVEATSGVSLYTWLDYPEGVVGYFEENAFVLAPGEKKEISFTVLEDTTDGAWVRNITVQSLWDQKVRG</sequence>
<dbReference type="EC" id="3.2.1.25"/>
<dbReference type="EMBL" id="AM270241">
    <property type="protein sequence ID" value="CAK96951.1"/>
    <property type="molecule type" value="Genomic_DNA"/>
</dbReference>
<dbReference type="SMR" id="A2QWU9"/>
<dbReference type="CAZy" id="GH2">
    <property type="family name" value="Glycoside Hydrolase Family 2"/>
</dbReference>
<dbReference type="GlyCosmos" id="A2QWU9">
    <property type="glycosylation" value="15 sites, No reported glycans"/>
</dbReference>
<dbReference type="EnsemblFungi" id="CAK96951">
    <property type="protein sequence ID" value="CAK96951"/>
    <property type="gene ID" value="An11g06540"/>
</dbReference>
<dbReference type="HOGENOM" id="CLU_005015_3_0_1"/>
<dbReference type="UniPathway" id="UPA00280"/>
<dbReference type="Proteomes" id="UP000006706">
    <property type="component" value="Chromosome 7R"/>
</dbReference>
<dbReference type="GO" id="GO:0005576">
    <property type="term" value="C:extracellular region"/>
    <property type="evidence" value="ECO:0007669"/>
    <property type="project" value="UniProtKB-SubCell"/>
</dbReference>
<dbReference type="GO" id="GO:0004567">
    <property type="term" value="F:beta-mannosidase activity"/>
    <property type="evidence" value="ECO:0007669"/>
    <property type="project" value="UniProtKB-EC"/>
</dbReference>
<dbReference type="GO" id="GO:0006516">
    <property type="term" value="P:glycoprotein catabolic process"/>
    <property type="evidence" value="ECO:0007669"/>
    <property type="project" value="TreeGrafter"/>
</dbReference>
<dbReference type="GO" id="GO:0000272">
    <property type="term" value="P:polysaccharide catabolic process"/>
    <property type="evidence" value="ECO:0007669"/>
    <property type="project" value="UniProtKB-KW"/>
</dbReference>
<dbReference type="FunFam" id="2.60.120.260:FF:000200">
    <property type="entry name" value="Beta-mannosidase A"/>
    <property type="match status" value="1"/>
</dbReference>
<dbReference type="FunFam" id="2.60.40.10:FF:001511">
    <property type="entry name" value="Beta-mannosidase A"/>
    <property type="match status" value="1"/>
</dbReference>
<dbReference type="FunFam" id="2.60.40.10:FF:002310">
    <property type="entry name" value="Beta-mannosidase A"/>
    <property type="match status" value="1"/>
</dbReference>
<dbReference type="FunFam" id="3.20.20.80:FF:000084">
    <property type="entry name" value="Beta-mannosidase A"/>
    <property type="match status" value="1"/>
</dbReference>
<dbReference type="Gene3D" id="2.60.120.260">
    <property type="entry name" value="Galactose-binding domain-like"/>
    <property type="match status" value="1"/>
</dbReference>
<dbReference type="Gene3D" id="3.20.20.80">
    <property type="entry name" value="Glycosidases"/>
    <property type="match status" value="1"/>
</dbReference>
<dbReference type="Gene3D" id="2.60.40.10">
    <property type="entry name" value="Immunoglobulins"/>
    <property type="match status" value="3"/>
</dbReference>
<dbReference type="InterPro" id="IPR036156">
    <property type="entry name" value="Beta-gal/glucu_dom_sf"/>
</dbReference>
<dbReference type="InterPro" id="IPR054593">
    <property type="entry name" value="Beta-mannosidase-like_N2"/>
</dbReference>
<dbReference type="InterPro" id="IPR050887">
    <property type="entry name" value="Beta-mannosidase_GH2"/>
</dbReference>
<dbReference type="InterPro" id="IPR041625">
    <property type="entry name" value="Beta-mannosidase_Ig"/>
</dbReference>
<dbReference type="InterPro" id="IPR008979">
    <property type="entry name" value="Galactose-bd-like_sf"/>
</dbReference>
<dbReference type="InterPro" id="IPR006102">
    <property type="entry name" value="Glyco_hydro_2_Ig-like"/>
</dbReference>
<dbReference type="InterPro" id="IPR017853">
    <property type="entry name" value="Glycoside_hydrolase_SF"/>
</dbReference>
<dbReference type="InterPro" id="IPR013783">
    <property type="entry name" value="Ig-like_fold"/>
</dbReference>
<dbReference type="InterPro" id="IPR041447">
    <property type="entry name" value="Mannosidase_ig"/>
</dbReference>
<dbReference type="PANTHER" id="PTHR43730">
    <property type="entry name" value="BETA-MANNOSIDASE"/>
    <property type="match status" value="1"/>
</dbReference>
<dbReference type="PANTHER" id="PTHR43730:SF5">
    <property type="entry name" value="BETA-MANNOSIDASE A"/>
    <property type="match status" value="1"/>
</dbReference>
<dbReference type="Pfam" id="PF00703">
    <property type="entry name" value="Glyco_hydro_2"/>
    <property type="match status" value="1"/>
</dbReference>
<dbReference type="Pfam" id="PF22666">
    <property type="entry name" value="Glyco_hydro_2_N2"/>
    <property type="match status" value="1"/>
</dbReference>
<dbReference type="Pfam" id="PF17753">
    <property type="entry name" value="Ig_mannosidase"/>
    <property type="match status" value="1"/>
</dbReference>
<dbReference type="Pfam" id="PF17786">
    <property type="entry name" value="Mannosidase_ig"/>
    <property type="match status" value="1"/>
</dbReference>
<dbReference type="SUPFAM" id="SSF51445">
    <property type="entry name" value="(Trans)glycosidases"/>
    <property type="match status" value="1"/>
</dbReference>
<dbReference type="SUPFAM" id="SSF49303">
    <property type="entry name" value="beta-Galactosidase/glucuronidase domain"/>
    <property type="match status" value="1"/>
</dbReference>
<dbReference type="SUPFAM" id="SSF49785">
    <property type="entry name" value="Galactose-binding domain-like"/>
    <property type="match status" value="1"/>
</dbReference>
<evidence type="ECO:0000250" key="1"/>
<evidence type="ECO:0000255" key="2"/>
<evidence type="ECO:0000305" key="3"/>
<proteinExistence type="inferred from homology"/>
<reference key="1">
    <citation type="journal article" date="2007" name="Nat. Biotechnol.">
        <title>Genome sequencing and analysis of the versatile cell factory Aspergillus niger CBS 513.88.</title>
        <authorList>
            <person name="Pel H.J."/>
            <person name="de Winde J.H."/>
            <person name="Archer D.B."/>
            <person name="Dyer P.S."/>
            <person name="Hofmann G."/>
            <person name="Schaap P.J."/>
            <person name="Turner G."/>
            <person name="de Vries R.P."/>
            <person name="Albang R."/>
            <person name="Albermann K."/>
            <person name="Andersen M.R."/>
            <person name="Bendtsen J.D."/>
            <person name="Benen J.A.E."/>
            <person name="van den Berg M."/>
            <person name="Breestraat S."/>
            <person name="Caddick M.X."/>
            <person name="Contreras R."/>
            <person name="Cornell M."/>
            <person name="Coutinho P.M."/>
            <person name="Danchin E.G.J."/>
            <person name="Debets A.J.M."/>
            <person name="Dekker P."/>
            <person name="van Dijck P.W.M."/>
            <person name="van Dijk A."/>
            <person name="Dijkhuizen L."/>
            <person name="Driessen A.J.M."/>
            <person name="d'Enfert C."/>
            <person name="Geysens S."/>
            <person name="Goosen C."/>
            <person name="Groot G.S.P."/>
            <person name="de Groot P.W.J."/>
            <person name="Guillemette T."/>
            <person name="Henrissat B."/>
            <person name="Herweijer M."/>
            <person name="van den Hombergh J.P.T.W."/>
            <person name="van den Hondel C.A.M.J.J."/>
            <person name="van der Heijden R.T.J.M."/>
            <person name="van der Kaaij R.M."/>
            <person name="Klis F.M."/>
            <person name="Kools H.J."/>
            <person name="Kubicek C.P."/>
            <person name="van Kuyk P.A."/>
            <person name="Lauber J."/>
            <person name="Lu X."/>
            <person name="van der Maarel M.J.E.C."/>
            <person name="Meulenberg R."/>
            <person name="Menke H."/>
            <person name="Mortimer M.A."/>
            <person name="Nielsen J."/>
            <person name="Oliver S.G."/>
            <person name="Olsthoorn M."/>
            <person name="Pal K."/>
            <person name="van Peij N.N.M.E."/>
            <person name="Ram A.F.J."/>
            <person name="Rinas U."/>
            <person name="Roubos J.A."/>
            <person name="Sagt C.M.J."/>
            <person name="Schmoll M."/>
            <person name="Sun J."/>
            <person name="Ussery D."/>
            <person name="Varga J."/>
            <person name="Vervecken W."/>
            <person name="van de Vondervoort P.J.J."/>
            <person name="Wedler H."/>
            <person name="Woesten H.A.B."/>
            <person name="Zeng A.-P."/>
            <person name="van Ooyen A.J.J."/>
            <person name="Visser J."/>
            <person name="Stam H."/>
        </authorList>
    </citation>
    <scope>NUCLEOTIDE SEQUENCE [LARGE SCALE GENOMIC DNA]</scope>
    <source>
        <strain>ATCC MYA-4892 / CBS 513.88 / FGSC A1513</strain>
    </source>
</reference>
<comment type="function">
    <text evidence="1">Exoglycosidase that cleaves the single beta-linked mannose residue from the non-reducing end of beta-mannosidic oligosaccharides of various complexity and length. Involved in the degradation of polymeric mannan and galactomannan (By similarity).</text>
</comment>
<comment type="catalytic activity">
    <reaction>
        <text>Hydrolysis of terminal, non-reducing beta-D-mannose residues in beta-D-mannosides.</text>
        <dbReference type="EC" id="3.2.1.25"/>
    </reaction>
</comment>
<comment type="pathway">
    <text>Glycan metabolism; N-glycan degradation.</text>
</comment>
<comment type="subunit">
    <text evidence="1">Homodimer.</text>
</comment>
<comment type="subcellular location">
    <subcellularLocation>
        <location evidence="1">Secreted</location>
    </subcellularLocation>
</comment>
<comment type="similarity">
    <text evidence="3">Belongs to the glycosyl hydrolase 2 family. Beta-mannosidase A subfamily.</text>
</comment>
<protein>
    <recommendedName>
        <fullName>Beta-mannosidase A</fullName>
        <ecNumber>3.2.1.25</ecNumber>
    </recommendedName>
    <alternativeName>
        <fullName>Mannanase A</fullName>
        <shortName>Mannase A</shortName>
    </alternativeName>
</protein>
<accession>A2QWU9</accession>
<name>MANBA_ASPNC</name>
<keyword id="KW-0119">Carbohydrate metabolism</keyword>
<keyword id="KW-0325">Glycoprotein</keyword>
<keyword id="KW-0326">Glycosidase</keyword>
<keyword id="KW-0378">Hydrolase</keyword>
<keyword id="KW-0624">Polysaccharide degradation</keyword>
<keyword id="KW-1185">Reference proteome</keyword>
<keyword id="KW-0964">Secreted</keyword>
<keyword id="KW-0732">Signal</keyword>
<feature type="signal peptide" evidence="2">
    <location>
        <begin position="1"/>
        <end position="21"/>
    </location>
</feature>
<feature type="chain" id="PRO_5000220610" description="Beta-mannosidase A">
    <location>
        <begin position="22"/>
        <end position="931"/>
    </location>
</feature>
<feature type="active site" description="Proton donor" evidence="1">
    <location>
        <position position="479"/>
    </location>
</feature>
<feature type="glycosylation site" description="N-linked (GlcNAc...) asparagine" evidence="2">
    <location>
        <position position="40"/>
    </location>
</feature>
<feature type="glycosylation site" description="N-linked (GlcNAc...) asparagine" evidence="2">
    <location>
        <position position="79"/>
    </location>
</feature>
<feature type="glycosylation site" description="N-linked (GlcNAc...) asparagine" evidence="2">
    <location>
        <position position="247"/>
    </location>
</feature>
<feature type="glycosylation site" description="N-linked (GlcNAc...) asparagine" evidence="2">
    <location>
        <position position="282"/>
    </location>
</feature>
<feature type="glycosylation site" description="N-linked (GlcNAc...) asparagine" evidence="2">
    <location>
        <position position="316"/>
    </location>
</feature>
<feature type="glycosylation site" description="N-linked (GlcNAc...) asparagine" evidence="2">
    <location>
        <position position="326"/>
    </location>
</feature>
<feature type="glycosylation site" description="N-linked (GlcNAc...) asparagine" evidence="2">
    <location>
        <position position="347"/>
    </location>
</feature>
<feature type="glycosylation site" description="N-linked (GlcNAc...) asparagine" evidence="2">
    <location>
        <position position="550"/>
    </location>
</feature>
<feature type="glycosylation site" description="N-linked (GlcNAc...) asparagine" evidence="2">
    <location>
        <position position="608"/>
    </location>
</feature>
<feature type="glycosylation site" description="N-linked (GlcNAc...) asparagine" evidence="2">
    <location>
        <position position="658"/>
    </location>
</feature>
<feature type="glycosylation site" description="N-linked (GlcNAc...) asparagine" evidence="2">
    <location>
        <position position="738"/>
    </location>
</feature>
<feature type="glycosylation site" description="N-linked (GlcNAc...) asparagine" evidence="2">
    <location>
        <position position="790"/>
    </location>
</feature>
<feature type="glycosylation site" description="N-linked (GlcNAc...) asparagine" evidence="2">
    <location>
        <position position="798"/>
    </location>
</feature>
<feature type="glycosylation site" description="N-linked (GlcNAc...) asparagine" evidence="2">
    <location>
        <position position="830"/>
    </location>
</feature>
<feature type="glycosylation site" description="N-linked (GlcNAc...) asparagine" evidence="2">
    <location>
        <position position="918"/>
    </location>
</feature>
<organism>
    <name type="scientific">Aspergillus niger (strain ATCC MYA-4892 / CBS 513.88 / FGSC A1513)</name>
    <dbReference type="NCBI Taxonomy" id="425011"/>
    <lineage>
        <taxon>Eukaryota</taxon>
        <taxon>Fungi</taxon>
        <taxon>Dikarya</taxon>
        <taxon>Ascomycota</taxon>
        <taxon>Pezizomycotina</taxon>
        <taxon>Eurotiomycetes</taxon>
        <taxon>Eurotiomycetidae</taxon>
        <taxon>Eurotiales</taxon>
        <taxon>Aspergillaceae</taxon>
        <taxon>Aspergillus</taxon>
        <taxon>Aspergillus subgen. Circumdati</taxon>
    </lineage>
</organism>